<reference key="1">
    <citation type="journal article" date="2009" name="PLoS Biol.">
        <title>Lineage-specific biology revealed by a finished genome assembly of the mouse.</title>
        <authorList>
            <person name="Church D.M."/>
            <person name="Goodstadt L."/>
            <person name="Hillier L.W."/>
            <person name="Zody M.C."/>
            <person name="Goldstein S."/>
            <person name="She X."/>
            <person name="Bult C.J."/>
            <person name="Agarwala R."/>
            <person name="Cherry J.L."/>
            <person name="DiCuccio M."/>
            <person name="Hlavina W."/>
            <person name="Kapustin Y."/>
            <person name="Meric P."/>
            <person name="Maglott D."/>
            <person name="Birtle Z."/>
            <person name="Marques A.C."/>
            <person name="Graves T."/>
            <person name="Zhou S."/>
            <person name="Teague B."/>
            <person name="Potamousis K."/>
            <person name="Churas C."/>
            <person name="Place M."/>
            <person name="Herschleb J."/>
            <person name="Runnheim R."/>
            <person name="Forrest D."/>
            <person name="Amos-Landgraf J."/>
            <person name="Schwartz D.C."/>
            <person name="Cheng Z."/>
            <person name="Lindblad-Toh K."/>
            <person name="Eichler E.E."/>
            <person name="Ponting C.P."/>
        </authorList>
    </citation>
    <scope>NUCLEOTIDE SEQUENCE [LARGE SCALE GENOMIC DNA]</scope>
    <source>
        <strain>C57BL/6J</strain>
    </source>
</reference>
<reference key="2">
    <citation type="journal article" date="2004" name="Genome Res.">
        <title>The status, quality, and expansion of the NIH full-length cDNA project: the Mammalian Gene Collection (MGC).</title>
        <authorList>
            <consortium name="The MGC Project Team"/>
        </authorList>
    </citation>
    <scope>NUCLEOTIDE SEQUENCE [LARGE SCALE MRNA] OF 19-613</scope>
    <source>
        <tissue evidence="7">Brain</tissue>
        <tissue evidence="6">Olfactory epithelium</tissue>
    </source>
</reference>
<evidence type="ECO:0000250" key="1">
    <source>
        <dbReference type="UniProtKB" id="A8I4E9"/>
    </source>
</evidence>
<evidence type="ECO:0000250" key="2">
    <source>
        <dbReference type="UniProtKB" id="Q494V2"/>
    </source>
</evidence>
<evidence type="ECO:0000255" key="3"/>
<evidence type="ECO:0000256" key="4">
    <source>
        <dbReference type="SAM" id="MobiDB-lite"/>
    </source>
</evidence>
<evidence type="ECO:0000305" key="5"/>
<evidence type="ECO:0000312" key="6">
    <source>
        <dbReference type="EMBL" id="AAH47211.1"/>
    </source>
</evidence>
<evidence type="ECO:0000312" key="7">
    <source>
        <dbReference type="EMBL" id="AAH79632.1"/>
    </source>
</evidence>
<evidence type="ECO:0000312" key="8">
    <source>
        <dbReference type="MGI" id="MGI:2141635"/>
    </source>
</evidence>
<protein>
    <recommendedName>
        <fullName evidence="5">Cilia- and flagella-associated protein 100</fullName>
    </recommendedName>
    <alternativeName>
        <fullName evidence="2">Coiled-coil domain-containing protein 37</fullName>
    </alternativeName>
</protein>
<accession>Q80VN0</accession>
<accession>E9PYA2</accession>
<accession>Q6AXD6</accession>
<proteinExistence type="evidence at transcript level"/>
<dbReference type="EMBL" id="AC163346">
    <property type="status" value="NOT_ANNOTATED_CDS"/>
    <property type="molecule type" value="Genomic_DNA"/>
</dbReference>
<dbReference type="EMBL" id="BC047211">
    <property type="protein sequence ID" value="AAH47211.1"/>
    <property type="status" value="ALT_SEQ"/>
    <property type="molecule type" value="mRNA"/>
</dbReference>
<dbReference type="EMBL" id="BC079632">
    <property type="protein sequence ID" value="AAH79632.1"/>
    <property type="status" value="ALT_SEQ"/>
    <property type="molecule type" value="mRNA"/>
</dbReference>
<dbReference type="CCDS" id="CCDS51849.1"/>
<dbReference type="RefSeq" id="NP_776136.2">
    <property type="nucleotide sequence ID" value="NM_173775.3"/>
</dbReference>
<dbReference type="SMR" id="Q80VN0"/>
<dbReference type="BioGRID" id="232535">
    <property type="interactions" value="3"/>
</dbReference>
<dbReference type="FunCoup" id="Q80VN0">
    <property type="interactions" value="44"/>
</dbReference>
<dbReference type="STRING" id="10090.ENSMUSP00000126515"/>
<dbReference type="iPTMnet" id="Q80VN0"/>
<dbReference type="PhosphoSitePlus" id="Q80VN0"/>
<dbReference type="PaxDb" id="10090-ENSMUSP00000126515"/>
<dbReference type="ProteomicsDB" id="283433"/>
<dbReference type="Antibodypedia" id="46637">
    <property type="antibodies" value="141 antibodies from 20 providers"/>
</dbReference>
<dbReference type="DNASU" id="243538"/>
<dbReference type="Ensembl" id="ENSMUST00000165673.5">
    <property type="protein sequence ID" value="ENSMUSP00000126515.2"/>
    <property type="gene ID" value="ENSMUSG00000048794.15"/>
</dbReference>
<dbReference type="GeneID" id="243538"/>
<dbReference type="KEGG" id="mmu:243538"/>
<dbReference type="UCSC" id="uc009cxg.2">
    <property type="organism name" value="mouse"/>
</dbReference>
<dbReference type="UCSC" id="uc012eoz.1">
    <property type="organism name" value="mouse"/>
</dbReference>
<dbReference type="AGR" id="MGI:2141635"/>
<dbReference type="CTD" id="348807"/>
<dbReference type="MGI" id="MGI:2141635">
    <property type="gene designation" value="Cfap100"/>
</dbReference>
<dbReference type="VEuPathDB" id="HostDB:ENSMUSG00000048794"/>
<dbReference type="eggNOG" id="ENOG502QSDI">
    <property type="taxonomic scope" value="Eukaryota"/>
</dbReference>
<dbReference type="GeneTree" id="ENSGT00940000153110"/>
<dbReference type="HOGENOM" id="CLU_026271_0_1_1"/>
<dbReference type="InParanoid" id="Q80VN0"/>
<dbReference type="OMA" id="AWKLSMT"/>
<dbReference type="OrthoDB" id="10264063at2759"/>
<dbReference type="PhylomeDB" id="Q80VN0"/>
<dbReference type="TreeFam" id="TF328835"/>
<dbReference type="BioGRID-ORCS" id="243538">
    <property type="hits" value="3 hits in 44 CRISPR screens"/>
</dbReference>
<dbReference type="PRO" id="PR:Q80VN0"/>
<dbReference type="Proteomes" id="UP000000589">
    <property type="component" value="Chromosome 6"/>
</dbReference>
<dbReference type="RNAct" id="Q80VN0">
    <property type="molecule type" value="protein"/>
</dbReference>
<dbReference type="Bgee" id="ENSMUSG00000048794">
    <property type="expression patterns" value="Expressed in spermatid and 65 other cell types or tissues"/>
</dbReference>
<dbReference type="ExpressionAtlas" id="Q80VN0">
    <property type="expression patterns" value="baseline and differential"/>
</dbReference>
<dbReference type="GO" id="GO:0097545">
    <property type="term" value="C:axonemal doublet microtubule"/>
    <property type="evidence" value="ECO:0000250"/>
    <property type="project" value="UniProtKB"/>
</dbReference>
<dbReference type="GO" id="GO:0036064">
    <property type="term" value="C:ciliary basal body"/>
    <property type="evidence" value="ECO:0007669"/>
    <property type="project" value="Ensembl"/>
</dbReference>
<dbReference type="GO" id="GO:0031514">
    <property type="term" value="C:motile cilium"/>
    <property type="evidence" value="ECO:0000250"/>
    <property type="project" value="UniProtKB"/>
</dbReference>
<dbReference type="GO" id="GO:0070840">
    <property type="term" value="F:dynein complex binding"/>
    <property type="evidence" value="ECO:0000250"/>
    <property type="project" value="UniProtKB"/>
</dbReference>
<dbReference type="GO" id="GO:0003341">
    <property type="term" value="P:cilium movement"/>
    <property type="evidence" value="ECO:0000250"/>
    <property type="project" value="UniProtKB"/>
</dbReference>
<dbReference type="GO" id="GO:0036159">
    <property type="term" value="P:inner dynein arm assembly"/>
    <property type="evidence" value="ECO:0000250"/>
    <property type="project" value="UniProtKB"/>
</dbReference>
<dbReference type="InterPro" id="IPR051147">
    <property type="entry name" value="CFAP_domain-containing"/>
</dbReference>
<dbReference type="InterPro" id="IPR025252">
    <property type="entry name" value="DUF4200"/>
</dbReference>
<dbReference type="PANTHER" id="PTHR21683:SF5">
    <property type="entry name" value="CILIA- AND FLAGELLA-ASSOCIATED PROTEIN 100"/>
    <property type="match status" value="1"/>
</dbReference>
<dbReference type="PANTHER" id="PTHR21683">
    <property type="entry name" value="COILED-COIL DOMAIN-CONTAINING PROTEIN 42 LIKE-2-LIKE-RELATED"/>
    <property type="match status" value="1"/>
</dbReference>
<dbReference type="Pfam" id="PF13863">
    <property type="entry name" value="DUF4200"/>
    <property type="match status" value="1"/>
</dbReference>
<feature type="chain" id="PRO_0000234489" description="Cilia- and flagella-associated protein 100">
    <location>
        <begin position="1"/>
        <end position="613"/>
    </location>
</feature>
<feature type="region of interest" description="Disordered" evidence="4">
    <location>
        <begin position="36"/>
        <end position="55"/>
    </location>
</feature>
<feature type="coiled-coil region" evidence="3">
    <location>
        <begin position="167"/>
        <end position="198"/>
    </location>
</feature>
<feature type="coiled-coil region" evidence="3">
    <location>
        <begin position="233"/>
        <end position="260"/>
    </location>
</feature>
<feature type="coiled-coil region" evidence="3">
    <location>
        <begin position="396"/>
        <end position="435"/>
    </location>
</feature>
<feature type="coiled-coil region" evidence="3">
    <location>
        <begin position="504"/>
        <end position="580"/>
    </location>
</feature>
<feature type="compositionally biased region" description="Polar residues" evidence="4">
    <location>
        <begin position="45"/>
        <end position="55"/>
    </location>
</feature>
<feature type="sequence conflict" description="In Ref. 2; AAH79632." evidence="5" ref="2">
    <original>E</original>
    <variation>V</variation>
    <location>
        <position position="535"/>
    </location>
</feature>
<name>CP100_MOUSE</name>
<keyword id="KW-0966">Cell projection</keyword>
<keyword id="KW-0969">Cilium</keyword>
<keyword id="KW-0175">Coiled coil</keyword>
<keyword id="KW-0963">Cytoplasm</keyword>
<keyword id="KW-0206">Cytoskeleton</keyword>
<keyword id="KW-1185">Reference proteome</keyword>
<organism>
    <name type="scientific">Mus musculus</name>
    <name type="common">Mouse</name>
    <dbReference type="NCBI Taxonomy" id="10090"/>
    <lineage>
        <taxon>Eukaryota</taxon>
        <taxon>Metazoa</taxon>
        <taxon>Chordata</taxon>
        <taxon>Craniata</taxon>
        <taxon>Vertebrata</taxon>
        <taxon>Euteleostomi</taxon>
        <taxon>Mammalia</taxon>
        <taxon>Eutheria</taxon>
        <taxon>Euarchontoglires</taxon>
        <taxon>Glires</taxon>
        <taxon>Rodentia</taxon>
        <taxon>Myomorpha</taxon>
        <taxon>Muroidea</taxon>
        <taxon>Muridae</taxon>
        <taxon>Murinae</taxon>
        <taxon>Mus</taxon>
        <taxon>Mus</taxon>
    </lineage>
</organism>
<gene>
    <name evidence="8" type="primary">Cfap100</name>
    <name evidence="8" type="synonym">Ccdc37</name>
</gene>
<sequence>MAFKARSSRFSVKMVEDTGGSQDLINNSFSSFIEEKSKESKKNKGNVTISDRSSNPFHISRDMDYFLLREQEQNQAIAEREQKKILRVHQKMTYASKVSAKHTSLRRELQLEDEMEQQLLNAEAKEMNCFRENNDWKLAMTRERKREPETLNDYMEKRRSMFLLQYALAMKRNEIQRLEMLATREENRLERAEKFLEKDASLFDEFLRENDRNSVQAMRMAEKETKIKTEKIVEIRELTAQITSIKSEISKFEDTLKHYKIYKEFLYKLSPKEWLDEQQEKHLAFKRAKESSELTRNNSTAILFGDKGSGSKSKTAFLWKEVPGLKKVTKTGRLVKALSSSIQSLPQVGQLTQLSPHSELDSRLSSTMFPSQDDTDSDGEELALYFTEPQQLLDVFTKLEEENLSLIQNTQEMEETLDELNVTLKNTQIRMDKEVNLLKQWIASMMISISKEEESAAELELKARVFHFGEYQGDQQDTMLESLNHKVLEVYRKCVGMQQEANLGTVQMLTVVERQLDELLENLERVPQVKIEQAEKAKERERRMRLREEKAMMQKQLQEERLQRARARAQAKIKKKRGRKLISRSHPPVIKVKEVREQTLINKDKEEMLFFFT</sequence>
<comment type="function">
    <text evidence="1">May play a role in ciliary/flagellar motility by regulating the assembly and the activity of axonemal inner dynein arm.</text>
</comment>
<comment type="subcellular location">
    <subcellularLocation>
        <location evidence="1">Cytoplasm</location>
        <location evidence="1">Cytoskeleton</location>
        <location evidence="1">Cilium axoneme</location>
    </subcellularLocation>
</comment>
<comment type="similarity">
    <text evidence="5">Belongs to the CFAP100 family.</text>
</comment>
<comment type="sequence caution" evidence="5">
    <conflict type="erroneous initiation">
        <sequence resource="EMBL-CDS" id="AAH47211"/>
    </conflict>
    <text>Truncated N-terminus.</text>
</comment>
<comment type="sequence caution" evidence="5">
    <conflict type="miscellaneous discrepancy">
        <sequence resource="EMBL-CDS" id="AAH47211"/>
    </conflict>
    <text>Intron retention, and aberrant splicing.</text>
</comment>
<comment type="sequence caution" evidence="5">
    <conflict type="erroneous initiation">
        <sequence resource="EMBL-CDS" id="AAH79632"/>
    </conflict>
    <text>Truncated N-terminus.</text>
</comment>
<comment type="sequence caution" evidence="5">
    <conflict type="miscellaneous discrepancy">
        <sequence resource="EMBL-CDS" id="AAH79632"/>
    </conflict>
    <text>Intron retention.</text>
</comment>